<gene>
    <name evidence="1" type="primary">ispD</name>
    <name type="ordered locus">NGO_0972</name>
</gene>
<sequence>MKRKNIALIPAAGIGVRFGADKPKQYVEIGSKTVLEHVLGIFERHEAVDLTVVVVSPEDTFADKVQTAFPQVRVWKNGGQTRAETVRNGVAKLLETGLAAETDNILVHDAARCCLPSEALARLIEQAGNAAEGGILAVPVADTLKRAESGQISATVDRSGLWQAQTPQLFQAGLLHRALAAENLGGITDEASAVEKLGVRPLLIQGDARNLKLTQPQDAYIVRLLLNAV</sequence>
<dbReference type="EC" id="2.7.7.60" evidence="1"/>
<dbReference type="EMBL" id="AE004969">
    <property type="protein sequence ID" value="AAW89658.1"/>
    <property type="molecule type" value="Genomic_DNA"/>
</dbReference>
<dbReference type="RefSeq" id="WP_003693342.1">
    <property type="nucleotide sequence ID" value="NC_002946.2"/>
</dbReference>
<dbReference type="RefSeq" id="YP_208070.1">
    <property type="nucleotide sequence ID" value="NC_002946.2"/>
</dbReference>
<dbReference type="PDB" id="1VGW">
    <property type="method" value="X-ray"/>
    <property type="resolution" value="2.35 A"/>
    <property type="chains" value="A/B/C/D/E/F=2-229"/>
</dbReference>
<dbReference type="PDB" id="1VGZ">
    <property type="method" value="X-ray"/>
    <property type="resolution" value="3.00 A"/>
    <property type="chains" value="A/B=2-229"/>
</dbReference>
<dbReference type="PDBsum" id="1VGW"/>
<dbReference type="PDBsum" id="1VGZ"/>
<dbReference type="SMR" id="Q5F829"/>
<dbReference type="STRING" id="242231.NGO_0972"/>
<dbReference type="KEGG" id="ngo:NGO_0972"/>
<dbReference type="PATRIC" id="fig|242231.10.peg.1138"/>
<dbReference type="HOGENOM" id="CLU_061281_3_0_4"/>
<dbReference type="UniPathway" id="UPA00056">
    <property type="reaction ID" value="UER00093"/>
</dbReference>
<dbReference type="EvolutionaryTrace" id="Q5F829"/>
<dbReference type="Proteomes" id="UP000000535">
    <property type="component" value="Chromosome"/>
</dbReference>
<dbReference type="GO" id="GO:0050518">
    <property type="term" value="F:2-C-methyl-D-erythritol 4-phosphate cytidylyltransferase activity"/>
    <property type="evidence" value="ECO:0007669"/>
    <property type="project" value="UniProtKB-UniRule"/>
</dbReference>
<dbReference type="GO" id="GO:0019288">
    <property type="term" value="P:isopentenyl diphosphate biosynthetic process, methylerythritol 4-phosphate pathway"/>
    <property type="evidence" value="ECO:0007669"/>
    <property type="project" value="UniProtKB-UniRule"/>
</dbReference>
<dbReference type="CDD" id="cd02516">
    <property type="entry name" value="CDP-ME_synthetase"/>
    <property type="match status" value="1"/>
</dbReference>
<dbReference type="FunFam" id="3.90.550.10:FF:000003">
    <property type="entry name" value="2-C-methyl-D-erythritol 4-phosphate cytidylyltransferase"/>
    <property type="match status" value="1"/>
</dbReference>
<dbReference type="Gene3D" id="3.90.550.10">
    <property type="entry name" value="Spore Coat Polysaccharide Biosynthesis Protein SpsA, Chain A"/>
    <property type="match status" value="1"/>
</dbReference>
<dbReference type="HAMAP" id="MF_00108">
    <property type="entry name" value="IspD"/>
    <property type="match status" value="1"/>
</dbReference>
<dbReference type="InterPro" id="IPR001228">
    <property type="entry name" value="IspD"/>
</dbReference>
<dbReference type="InterPro" id="IPR034683">
    <property type="entry name" value="IspD/TarI"/>
</dbReference>
<dbReference type="InterPro" id="IPR050088">
    <property type="entry name" value="IspD/TarI_cytidylyltransf_bact"/>
</dbReference>
<dbReference type="InterPro" id="IPR018294">
    <property type="entry name" value="ISPD_synthase_CS"/>
</dbReference>
<dbReference type="InterPro" id="IPR029044">
    <property type="entry name" value="Nucleotide-diphossugar_trans"/>
</dbReference>
<dbReference type="NCBIfam" id="TIGR00453">
    <property type="entry name" value="ispD"/>
    <property type="match status" value="1"/>
</dbReference>
<dbReference type="PANTHER" id="PTHR32125">
    <property type="entry name" value="2-C-METHYL-D-ERYTHRITOL 4-PHOSPHATE CYTIDYLYLTRANSFERASE, CHLOROPLASTIC"/>
    <property type="match status" value="1"/>
</dbReference>
<dbReference type="PANTHER" id="PTHR32125:SF4">
    <property type="entry name" value="2-C-METHYL-D-ERYTHRITOL 4-PHOSPHATE CYTIDYLYLTRANSFERASE, CHLOROPLASTIC"/>
    <property type="match status" value="1"/>
</dbReference>
<dbReference type="Pfam" id="PF01128">
    <property type="entry name" value="IspD"/>
    <property type="match status" value="1"/>
</dbReference>
<dbReference type="SUPFAM" id="SSF53448">
    <property type="entry name" value="Nucleotide-diphospho-sugar transferases"/>
    <property type="match status" value="1"/>
</dbReference>
<dbReference type="PROSITE" id="PS01295">
    <property type="entry name" value="ISPD"/>
    <property type="match status" value="1"/>
</dbReference>
<protein>
    <recommendedName>
        <fullName evidence="1">2-C-methyl-D-erythritol 4-phosphate cytidylyltransferase</fullName>
        <ecNumber evidence="1">2.7.7.60</ecNumber>
    </recommendedName>
    <alternativeName>
        <fullName evidence="1">4-diphosphocytidyl-2C-methyl-D-erythritol synthase</fullName>
    </alternativeName>
    <alternativeName>
        <fullName evidence="1">MEP cytidylyltransferase</fullName>
        <shortName evidence="1">MCT</shortName>
    </alternativeName>
</protein>
<accession>Q5F829</accession>
<evidence type="ECO:0000255" key="1">
    <source>
        <dbReference type="HAMAP-Rule" id="MF_00108"/>
    </source>
</evidence>
<evidence type="ECO:0007829" key="2">
    <source>
        <dbReference type="PDB" id="1VGW"/>
    </source>
</evidence>
<keyword id="KW-0002">3D-structure</keyword>
<keyword id="KW-0414">Isoprene biosynthesis</keyword>
<keyword id="KW-0548">Nucleotidyltransferase</keyword>
<keyword id="KW-1185">Reference proteome</keyword>
<keyword id="KW-0808">Transferase</keyword>
<reference key="1">
    <citation type="submission" date="2003-03" db="EMBL/GenBank/DDBJ databases">
        <title>The complete genome sequence of Neisseria gonorrhoeae.</title>
        <authorList>
            <person name="Lewis L.A."/>
            <person name="Gillaspy A.F."/>
            <person name="McLaughlin R.E."/>
            <person name="Gipson M."/>
            <person name="Ducey T.F."/>
            <person name="Ownbey T."/>
            <person name="Hartman K."/>
            <person name="Nydick C."/>
            <person name="Carson M.B."/>
            <person name="Vaughn J."/>
            <person name="Thomson C."/>
            <person name="Song L."/>
            <person name="Lin S."/>
            <person name="Yuan X."/>
            <person name="Najar F."/>
            <person name="Zhan M."/>
            <person name="Ren Q."/>
            <person name="Zhu H."/>
            <person name="Qi S."/>
            <person name="Kenton S.M."/>
            <person name="Lai H."/>
            <person name="White J.D."/>
            <person name="Clifton S."/>
            <person name="Roe B.A."/>
            <person name="Dyer D.W."/>
        </authorList>
    </citation>
    <scope>NUCLEOTIDE SEQUENCE [LARGE SCALE GENOMIC DNA]</scope>
    <source>
        <strain>ATCC 700825 / FA 1090</strain>
    </source>
</reference>
<comment type="function">
    <text evidence="1">Catalyzes the formation of 4-diphosphocytidyl-2-C-methyl-D-erythritol from CTP and 2-C-methyl-D-erythritol 4-phosphate (MEP).</text>
</comment>
<comment type="catalytic activity">
    <reaction evidence="1">
        <text>2-C-methyl-D-erythritol 4-phosphate + CTP + H(+) = 4-CDP-2-C-methyl-D-erythritol + diphosphate</text>
        <dbReference type="Rhea" id="RHEA:13429"/>
        <dbReference type="ChEBI" id="CHEBI:15378"/>
        <dbReference type="ChEBI" id="CHEBI:33019"/>
        <dbReference type="ChEBI" id="CHEBI:37563"/>
        <dbReference type="ChEBI" id="CHEBI:57823"/>
        <dbReference type="ChEBI" id="CHEBI:58262"/>
        <dbReference type="EC" id="2.7.7.60"/>
    </reaction>
</comment>
<comment type="pathway">
    <text evidence="1">Isoprenoid biosynthesis; isopentenyl diphosphate biosynthesis via DXP pathway; isopentenyl diphosphate from 1-deoxy-D-xylulose 5-phosphate: step 2/6.</text>
</comment>
<comment type="similarity">
    <text evidence="1">Belongs to the IspD/TarI cytidylyltransferase family. IspD subfamily.</text>
</comment>
<feature type="chain" id="PRO_0000237799" description="2-C-methyl-D-erythritol 4-phosphate cytidylyltransferase">
    <location>
        <begin position="1"/>
        <end position="229"/>
    </location>
</feature>
<feature type="site" description="Transition state stabilizer" evidence="1">
    <location>
        <position position="17"/>
    </location>
</feature>
<feature type="site" description="Transition state stabilizer" evidence="1">
    <location>
        <position position="24"/>
    </location>
</feature>
<feature type="site" description="Positions MEP for the nucleophilic attack" evidence="1">
    <location>
        <position position="158"/>
    </location>
</feature>
<feature type="site" description="Positions MEP for the nucleophilic attack" evidence="1">
    <location>
        <position position="212"/>
    </location>
</feature>
<feature type="strand" evidence="2">
    <location>
        <begin position="5"/>
        <end position="10"/>
    </location>
</feature>
<feature type="helix" evidence="2">
    <location>
        <begin position="34"/>
        <end position="43"/>
    </location>
</feature>
<feature type="strand" evidence="2">
    <location>
        <begin position="50"/>
        <end position="54"/>
    </location>
</feature>
<feature type="helix" evidence="2">
    <location>
        <begin position="62"/>
        <end position="68"/>
    </location>
</feature>
<feature type="strand" evidence="2">
    <location>
        <begin position="72"/>
        <end position="75"/>
    </location>
</feature>
<feature type="helix" evidence="2">
    <location>
        <begin position="82"/>
        <end position="96"/>
    </location>
</feature>
<feature type="strand" evidence="2">
    <location>
        <begin position="97"/>
        <end position="99"/>
    </location>
</feature>
<feature type="strand" evidence="2">
    <location>
        <begin position="103"/>
        <end position="107"/>
    </location>
</feature>
<feature type="helix" evidence="2">
    <location>
        <begin position="117"/>
        <end position="127"/>
    </location>
</feature>
<feature type="strand" evidence="2">
    <location>
        <begin position="134"/>
        <end position="139"/>
    </location>
</feature>
<feature type="strand" evidence="2">
    <location>
        <begin position="144"/>
        <end position="156"/>
    </location>
</feature>
<feature type="strand" evidence="2">
    <location>
        <begin position="161"/>
        <end position="171"/>
    </location>
</feature>
<feature type="helix" evidence="2">
    <location>
        <begin position="172"/>
        <end position="180"/>
    </location>
</feature>
<feature type="helix" evidence="2">
    <location>
        <begin position="190"/>
        <end position="195"/>
    </location>
</feature>
<feature type="turn" evidence="2">
    <location>
        <begin position="196"/>
        <end position="198"/>
    </location>
</feature>
<feature type="strand" evidence="2">
    <location>
        <begin position="202"/>
        <end position="205"/>
    </location>
</feature>
<feature type="helix" evidence="2">
    <location>
        <begin position="216"/>
        <end position="225"/>
    </location>
</feature>
<name>ISPD_NEIG1</name>
<proteinExistence type="evidence at protein level"/>
<organism>
    <name type="scientific">Neisseria gonorrhoeae (strain ATCC 700825 / FA 1090)</name>
    <dbReference type="NCBI Taxonomy" id="242231"/>
    <lineage>
        <taxon>Bacteria</taxon>
        <taxon>Pseudomonadati</taxon>
        <taxon>Pseudomonadota</taxon>
        <taxon>Betaproteobacteria</taxon>
        <taxon>Neisseriales</taxon>
        <taxon>Neisseriaceae</taxon>
        <taxon>Neisseria</taxon>
    </lineage>
</organism>